<proteinExistence type="evidence at transcript level"/>
<protein>
    <recommendedName>
        <fullName>N-acylneuraminate cytidylyltransferase</fullName>
        <ecNumber>2.7.7.43</ecNumber>
    </recommendedName>
    <alternativeName>
        <fullName>CMP-N-acetylneuraminic acid synthase</fullName>
        <shortName>CMP-NeuNAc synthase</shortName>
    </alternativeName>
</protein>
<comment type="function">
    <text evidence="1">Catalyzes the activation of N-acetylneuraminic acid (NeuNAc) to cytidine 5'-monophosphate N-acetylneuraminic acid (CMP-NeuNAc), a substrate required for the addition of sialic acid. Has some activity toward NeuNAc, N-glycolylneuraminic acid (Neu5Gc) or 2-keto-3-deoxy-D-glycero-D-galacto-nononic acid (KDN) (By similarity).</text>
</comment>
<comment type="catalytic activity">
    <reaction>
        <text>an N-acylneuraminate + CTP = a CMP-N-acyl-beta-neuraminate + diphosphate</text>
        <dbReference type="Rhea" id="RHEA:11344"/>
        <dbReference type="ChEBI" id="CHEBI:33019"/>
        <dbReference type="ChEBI" id="CHEBI:37563"/>
        <dbReference type="ChEBI" id="CHEBI:60073"/>
        <dbReference type="ChEBI" id="CHEBI:68671"/>
        <dbReference type="EC" id="2.7.7.43"/>
    </reaction>
</comment>
<comment type="pathway">
    <text>Amino-sugar metabolism; N-acetylneuraminate metabolism.</text>
</comment>
<comment type="subunit">
    <text evidence="1">Homotetramer; the active enzyme is formed by a dimer of dimers.</text>
</comment>
<comment type="subcellular location">
    <subcellularLocation>
        <location evidence="1">Nucleus</location>
    </subcellularLocation>
</comment>
<comment type="domain">
    <text evidence="1">The BC2 (basic cluster 2) motif is necessary and sufficient for the nuclear localization and contains the catalytic active site. The localization in the nucleus is however not required for the enzyme activity (By similarity).</text>
</comment>
<comment type="similarity">
    <text evidence="5">Belongs to the CMP-NeuNAc synthase family.</text>
</comment>
<sequence>MDSVEKGAATSVSNPRGRPSRGRPPKLQRNSRGGQGRGVEKPPHMAALILARGGSKGIPLKNIKHLAGVPLIGWVLRAALDSGVFQSIWVSTDHDEIENVAKQFGAQVHRRSSEASKDSSTSLDAIIEFLNYHNEVDIVGNIQATSPCLHPTDLQKVAEMIREEGYDSVFSVVRRHQFRWGEIQKGVREMTEPLNLNPAKRPRRQDWDGELYENGSFYFAKRHLIEMGYLQGGKMAYYEMRAEHSVDIDVDIDWPIAEQRVLRYGYFGKEKLKEIKLFVCNIDGCLTNGHIYVSGDQKEIISYDVKDAIGISLLKKSGIEVRLISERACSKQTLSSLKLDCKMEVNVPDKLAVVDEWRKEMGLCWKEVAYLGNEVSDEECLKKVGLSGVPADACAAAQKAVGYICKSSGGRGALREFAEHIFLLMEKVINSCQK</sequence>
<keyword id="KW-0007">Acetylation</keyword>
<keyword id="KW-0488">Methylation</keyword>
<keyword id="KW-0548">Nucleotidyltransferase</keyword>
<keyword id="KW-0539">Nucleus</keyword>
<keyword id="KW-1185">Reference proteome</keyword>
<keyword id="KW-0808">Transferase</keyword>
<dbReference type="EC" id="2.7.7.43"/>
<dbReference type="EMBL" id="BC102786">
    <property type="protein sequence ID" value="AAI02787.1"/>
    <property type="molecule type" value="mRNA"/>
</dbReference>
<dbReference type="RefSeq" id="NP_001030475.1">
    <property type="nucleotide sequence ID" value="NM_001035398.1"/>
</dbReference>
<dbReference type="SMR" id="Q3SZM5"/>
<dbReference type="FunCoup" id="Q3SZM5">
    <property type="interactions" value="426"/>
</dbReference>
<dbReference type="STRING" id="9913.ENSBTAP00000013373"/>
<dbReference type="PaxDb" id="9913-ENSBTAP00000013373"/>
<dbReference type="Ensembl" id="ENSBTAT00000013373.7">
    <property type="protein sequence ID" value="ENSBTAP00000013373.6"/>
    <property type="gene ID" value="ENSBTAG00000010136.7"/>
</dbReference>
<dbReference type="GeneID" id="100336710"/>
<dbReference type="KEGG" id="bta:100336710"/>
<dbReference type="CTD" id="55907"/>
<dbReference type="VEuPathDB" id="HostDB:ENSBTAG00000010136"/>
<dbReference type="VGNC" id="VGNC:27476">
    <property type="gene designation" value="CMAS"/>
</dbReference>
<dbReference type="eggNOG" id="ENOG502QQH3">
    <property type="taxonomic scope" value="Eukaryota"/>
</dbReference>
<dbReference type="GeneTree" id="ENSGT00390000004237"/>
<dbReference type="InParanoid" id="Q3SZM5"/>
<dbReference type="OMA" id="FHGFVWR"/>
<dbReference type="OrthoDB" id="10262032at2759"/>
<dbReference type="Reactome" id="R-BTA-4085001">
    <property type="pathway name" value="Sialic acid metabolism"/>
</dbReference>
<dbReference type="UniPathway" id="UPA00628"/>
<dbReference type="Proteomes" id="UP000009136">
    <property type="component" value="Chromosome 5"/>
</dbReference>
<dbReference type="Bgee" id="ENSBTAG00000010136">
    <property type="expression patterns" value="Expressed in spermatocyte and 104 other cell types or tissues"/>
</dbReference>
<dbReference type="GO" id="GO:0005634">
    <property type="term" value="C:nucleus"/>
    <property type="evidence" value="ECO:0007669"/>
    <property type="project" value="UniProtKB-SubCell"/>
</dbReference>
<dbReference type="GO" id="GO:0090633">
    <property type="term" value="F:keto-deoxynonulosonic acid (KDN) cytidylyltransferase activity"/>
    <property type="evidence" value="ECO:0000314"/>
    <property type="project" value="AgBase"/>
</dbReference>
<dbReference type="GO" id="GO:0008781">
    <property type="term" value="F:N-acylneuraminate cytidylyltransferase activity"/>
    <property type="evidence" value="ECO:0000314"/>
    <property type="project" value="AgBase"/>
</dbReference>
<dbReference type="GO" id="GO:0090632">
    <property type="term" value="F:N-glycolylneuraminic acid (Neu5Gc) cytidylyltransferase activity"/>
    <property type="evidence" value="ECO:0000314"/>
    <property type="project" value="AgBase"/>
</dbReference>
<dbReference type="GO" id="GO:0006055">
    <property type="term" value="P:CMP-N-acetylneuraminate biosynthetic process"/>
    <property type="evidence" value="ECO:0007669"/>
    <property type="project" value="Ensembl"/>
</dbReference>
<dbReference type="GO" id="GO:0070085">
    <property type="term" value="P:glycosylation"/>
    <property type="evidence" value="ECO:0007669"/>
    <property type="project" value="Ensembl"/>
</dbReference>
<dbReference type="GO" id="GO:0006054">
    <property type="term" value="P:N-acetylneuraminate metabolic process"/>
    <property type="evidence" value="ECO:0007669"/>
    <property type="project" value="UniProtKB-UniPathway"/>
</dbReference>
<dbReference type="CDD" id="cd02513">
    <property type="entry name" value="CMP-NeuAc_Synthase"/>
    <property type="match status" value="1"/>
</dbReference>
<dbReference type="FunFam" id="3.40.50.1000:FF:000082">
    <property type="entry name" value="N-acylneuraminate cytidylyltransferase A"/>
    <property type="match status" value="1"/>
</dbReference>
<dbReference type="FunFam" id="3.90.550.10:FF:000074">
    <property type="entry name" value="N-acylneuraminate cytidylyltransferase A"/>
    <property type="match status" value="1"/>
</dbReference>
<dbReference type="Gene3D" id="3.40.50.1000">
    <property type="entry name" value="HAD superfamily/HAD-like"/>
    <property type="match status" value="1"/>
</dbReference>
<dbReference type="Gene3D" id="3.90.550.10">
    <property type="entry name" value="Spore Coat Polysaccharide Biosynthesis Protein SpsA, Chain A"/>
    <property type="match status" value="1"/>
</dbReference>
<dbReference type="InterPro" id="IPR050793">
    <property type="entry name" value="CMP-NeuNAc_synthase"/>
</dbReference>
<dbReference type="InterPro" id="IPR003329">
    <property type="entry name" value="Cytidylyl_trans"/>
</dbReference>
<dbReference type="InterPro" id="IPR036412">
    <property type="entry name" value="HAD-like_sf"/>
</dbReference>
<dbReference type="InterPro" id="IPR023214">
    <property type="entry name" value="HAD_sf"/>
</dbReference>
<dbReference type="InterPro" id="IPR029044">
    <property type="entry name" value="Nucleotide-diphossugar_trans"/>
</dbReference>
<dbReference type="PANTHER" id="PTHR21485">
    <property type="entry name" value="HAD SUPERFAMILY MEMBERS CMAS AND KDSC"/>
    <property type="match status" value="1"/>
</dbReference>
<dbReference type="PANTHER" id="PTHR21485:SF3">
    <property type="entry name" value="N-ACYLNEURAMINATE CYTIDYLYLTRANSFERASE"/>
    <property type="match status" value="1"/>
</dbReference>
<dbReference type="Pfam" id="PF02348">
    <property type="entry name" value="CTP_transf_3"/>
    <property type="match status" value="1"/>
</dbReference>
<dbReference type="SUPFAM" id="SSF56784">
    <property type="entry name" value="HAD-like"/>
    <property type="match status" value="1"/>
</dbReference>
<dbReference type="SUPFAM" id="SSF53448">
    <property type="entry name" value="Nucleotide-diphospho-sugar transferases"/>
    <property type="match status" value="1"/>
</dbReference>
<name>NEUA_BOVIN</name>
<evidence type="ECO:0000250" key="1"/>
<evidence type="ECO:0000250" key="2">
    <source>
        <dbReference type="UniProtKB" id="Q8NFW8"/>
    </source>
</evidence>
<evidence type="ECO:0000250" key="3">
    <source>
        <dbReference type="UniProtKB" id="Q99KK2"/>
    </source>
</evidence>
<evidence type="ECO:0000256" key="4">
    <source>
        <dbReference type="SAM" id="MobiDB-lite"/>
    </source>
</evidence>
<evidence type="ECO:0000305" key="5"/>
<organism>
    <name type="scientific">Bos taurus</name>
    <name type="common">Bovine</name>
    <dbReference type="NCBI Taxonomy" id="9913"/>
    <lineage>
        <taxon>Eukaryota</taxon>
        <taxon>Metazoa</taxon>
        <taxon>Chordata</taxon>
        <taxon>Craniata</taxon>
        <taxon>Vertebrata</taxon>
        <taxon>Euteleostomi</taxon>
        <taxon>Mammalia</taxon>
        <taxon>Eutheria</taxon>
        <taxon>Laurasiatheria</taxon>
        <taxon>Artiodactyla</taxon>
        <taxon>Ruminantia</taxon>
        <taxon>Pecora</taxon>
        <taxon>Bovidae</taxon>
        <taxon>Bovinae</taxon>
        <taxon>Bos</taxon>
    </lineage>
</organism>
<feature type="chain" id="PRO_0000317033" description="N-acylneuraminate cytidylyltransferase">
    <location>
        <begin position="1"/>
        <end position="434"/>
    </location>
</feature>
<feature type="region of interest" description="Disordered" evidence="4">
    <location>
        <begin position="1"/>
        <end position="42"/>
    </location>
</feature>
<feature type="short sequence motif" description="BC1 motif">
    <location>
        <begin position="15"/>
        <end position="31"/>
    </location>
</feature>
<feature type="short sequence motif" description="BC2 motif">
    <location>
        <begin position="200"/>
        <end position="206"/>
    </location>
</feature>
<feature type="short sequence motif" description="BC3 motif">
    <location>
        <begin position="269"/>
        <end position="276"/>
    </location>
</feature>
<feature type="active site" evidence="1">
    <location>
        <position position="201"/>
    </location>
</feature>
<feature type="binding site" evidence="1">
    <location>
        <position position="52"/>
    </location>
    <ligand>
        <name>substrate</name>
    </ligand>
</feature>
<feature type="binding site" evidence="1">
    <location>
        <position position="62"/>
    </location>
    <ligand>
        <name>substrate</name>
    </ligand>
</feature>
<feature type="binding site" evidence="1">
    <location>
        <position position="111"/>
    </location>
    <ligand>
        <name>substrate</name>
    </ligand>
</feature>
<feature type="binding site" evidence="1">
    <location>
        <position position="120"/>
    </location>
    <ligand>
        <name>substrate</name>
    </ligand>
</feature>
<feature type="binding site" evidence="1">
    <location>
        <position position="122"/>
    </location>
    <ligand>
        <name>substrate</name>
    </ligand>
</feature>
<feature type="binding site" evidence="1">
    <location>
        <position position="143"/>
    </location>
    <ligand>
        <name>substrate</name>
    </ligand>
</feature>
<feature type="modified residue" description="N-acetylmethionine" evidence="2">
    <location>
        <position position="1"/>
    </location>
</feature>
<feature type="modified residue" description="Omega-N-methylarginine" evidence="3">
    <location>
        <position position="37"/>
    </location>
</feature>
<feature type="modified residue" description="Omega-N-methylarginine" evidence="3">
    <location>
        <position position="52"/>
    </location>
</feature>
<gene>
    <name type="primary">CMAS</name>
</gene>
<reference key="1">
    <citation type="submission" date="2005-08" db="EMBL/GenBank/DDBJ databases">
        <authorList>
            <consortium name="NIH - Mammalian Gene Collection (MGC) project"/>
        </authorList>
    </citation>
    <scope>NUCLEOTIDE SEQUENCE [LARGE SCALE MRNA]</scope>
    <source>
        <strain>Crossbred X Angus</strain>
        <tissue>Ileum</tissue>
    </source>
</reference>
<accession>Q3SZM5</accession>